<gene>
    <name evidence="1" type="primary">purC</name>
    <name type="ordered locus">CT0960</name>
</gene>
<feature type="chain" id="PRO_0000100815" description="Phosphoribosylaminoimidazole-succinocarboxamide synthase">
    <location>
        <begin position="1"/>
        <end position="235"/>
    </location>
</feature>
<protein>
    <recommendedName>
        <fullName evidence="1">Phosphoribosylaminoimidazole-succinocarboxamide synthase</fullName>
        <ecNumber evidence="1">6.3.2.6</ecNumber>
    </recommendedName>
    <alternativeName>
        <fullName evidence="1">SAICAR synthetase</fullName>
    </alternativeName>
</protein>
<accession>Q8KDT4</accession>
<dbReference type="EC" id="6.3.2.6" evidence="1"/>
<dbReference type="EMBL" id="AE006470">
    <property type="protein sequence ID" value="AAM72195.1"/>
    <property type="molecule type" value="Genomic_DNA"/>
</dbReference>
<dbReference type="RefSeq" id="NP_661853.1">
    <property type="nucleotide sequence ID" value="NC_002932.3"/>
</dbReference>
<dbReference type="RefSeq" id="WP_010932640.1">
    <property type="nucleotide sequence ID" value="NC_002932.3"/>
</dbReference>
<dbReference type="SMR" id="Q8KDT4"/>
<dbReference type="STRING" id="194439.CT0960"/>
<dbReference type="EnsemblBacteria" id="AAM72195">
    <property type="protein sequence ID" value="AAM72195"/>
    <property type="gene ID" value="CT0960"/>
</dbReference>
<dbReference type="KEGG" id="cte:CT0960"/>
<dbReference type="PATRIC" id="fig|194439.7.peg.870"/>
<dbReference type="eggNOG" id="COG0152">
    <property type="taxonomic scope" value="Bacteria"/>
</dbReference>
<dbReference type="HOGENOM" id="CLU_061495_2_0_10"/>
<dbReference type="OrthoDB" id="9801549at2"/>
<dbReference type="UniPathway" id="UPA00074">
    <property type="reaction ID" value="UER00131"/>
</dbReference>
<dbReference type="Proteomes" id="UP000001007">
    <property type="component" value="Chromosome"/>
</dbReference>
<dbReference type="GO" id="GO:0005524">
    <property type="term" value="F:ATP binding"/>
    <property type="evidence" value="ECO:0007669"/>
    <property type="project" value="UniProtKB-KW"/>
</dbReference>
<dbReference type="GO" id="GO:0004639">
    <property type="term" value="F:phosphoribosylaminoimidazolesuccinocarboxamide synthase activity"/>
    <property type="evidence" value="ECO:0007669"/>
    <property type="project" value="UniProtKB-UniRule"/>
</dbReference>
<dbReference type="GO" id="GO:0006189">
    <property type="term" value="P:'de novo' IMP biosynthetic process"/>
    <property type="evidence" value="ECO:0007669"/>
    <property type="project" value="UniProtKB-UniRule"/>
</dbReference>
<dbReference type="GO" id="GO:0009236">
    <property type="term" value="P:cobalamin biosynthetic process"/>
    <property type="evidence" value="ECO:0007669"/>
    <property type="project" value="InterPro"/>
</dbReference>
<dbReference type="CDD" id="cd01415">
    <property type="entry name" value="SAICAR_synt_PurC"/>
    <property type="match status" value="1"/>
</dbReference>
<dbReference type="FunFam" id="3.30.470.20:FF:000006">
    <property type="entry name" value="Phosphoribosylaminoimidazole-succinocarboxamide synthase"/>
    <property type="match status" value="1"/>
</dbReference>
<dbReference type="Gene3D" id="3.30.470.20">
    <property type="entry name" value="ATP-grasp fold, B domain"/>
    <property type="match status" value="1"/>
</dbReference>
<dbReference type="Gene3D" id="3.30.200.20">
    <property type="entry name" value="Phosphorylase Kinase, domain 1"/>
    <property type="match status" value="1"/>
</dbReference>
<dbReference type="HAMAP" id="MF_00137">
    <property type="entry name" value="SAICAR_synth"/>
    <property type="match status" value="1"/>
</dbReference>
<dbReference type="InterPro" id="IPR028923">
    <property type="entry name" value="SAICAR_synt/ADE2_N"/>
</dbReference>
<dbReference type="InterPro" id="IPR033934">
    <property type="entry name" value="SAICAR_synt_PurC"/>
</dbReference>
<dbReference type="InterPro" id="IPR001636">
    <property type="entry name" value="SAICAR_synth"/>
</dbReference>
<dbReference type="InterPro" id="IPR050089">
    <property type="entry name" value="SAICAR_synthetase"/>
</dbReference>
<dbReference type="InterPro" id="IPR018236">
    <property type="entry name" value="SAICAR_synthetase_CS"/>
</dbReference>
<dbReference type="NCBIfam" id="TIGR00081">
    <property type="entry name" value="purC"/>
    <property type="match status" value="1"/>
</dbReference>
<dbReference type="PANTHER" id="PTHR43599">
    <property type="entry name" value="MULTIFUNCTIONAL PROTEIN ADE2"/>
    <property type="match status" value="1"/>
</dbReference>
<dbReference type="PANTHER" id="PTHR43599:SF3">
    <property type="entry name" value="SI:DKEY-6E2.2"/>
    <property type="match status" value="1"/>
</dbReference>
<dbReference type="Pfam" id="PF01259">
    <property type="entry name" value="SAICAR_synt"/>
    <property type="match status" value="1"/>
</dbReference>
<dbReference type="SUPFAM" id="SSF56104">
    <property type="entry name" value="SAICAR synthase-like"/>
    <property type="match status" value="1"/>
</dbReference>
<dbReference type="PROSITE" id="PS01057">
    <property type="entry name" value="SAICAR_SYNTHETASE_1"/>
    <property type="match status" value="1"/>
</dbReference>
<dbReference type="PROSITE" id="PS01058">
    <property type="entry name" value="SAICAR_SYNTHETASE_2"/>
    <property type="match status" value="1"/>
</dbReference>
<keyword id="KW-0067">ATP-binding</keyword>
<keyword id="KW-0436">Ligase</keyword>
<keyword id="KW-0547">Nucleotide-binding</keyword>
<keyword id="KW-0658">Purine biosynthesis</keyword>
<keyword id="KW-1185">Reference proteome</keyword>
<comment type="catalytic activity">
    <reaction evidence="1">
        <text>5-amino-1-(5-phospho-D-ribosyl)imidazole-4-carboxylate + L-aspartate + ATP = (2S)-2-[5-amino-1-(5-phospho-beta-D-ribosyl)imidazole-4-carboxamido]succinate + ADP + phosphate + 2 H(+)</text>
        <dbReference type="Rhea" id="RHEA:22628"/>
        <dbReference type="ChEBI" id="CHEBI:15378"/>
        <dbReference type="ChEBI" id="CHEBI:29991"/>
        <dbReference type="ChEBI" id="CHEBI:30616"/>
        <dbReference type="ChEBI" id="CHEBI:43474"/>
        <dbReference type="ChEBI" id="CHEBI:58443"/>
        <dbReference type="ChEBI" id="CHEBI:77657"/>
        <dbReference type="ChEBI" id="CHEBI:456216"/>
        <dbReference type="EC" id="6.3.2.6"/>
    </reaction>
</comment>
<comment type="pathway">
    <text evidence="1">Purine metabolism; IMP biosynthesis via de novo pathway; 5-amino-1-(5-phospho-D-ribosyl)imidazole-4-carboxamide from 5-amino-1-(5-phospho-D-ribosyl)imidazole-4-carboxylate: step 1/2.</text>
</comment>
<comment type="similarity">
    <text evidence="1">Belongs to the SAICAR synthetase family.</text>
</comment>
<organism>
    <name type="scientific">Chlorobaculum tepidum (strain ATCC 49652 / DSM 12025 / NBRC 103806 / TLS)</name>
    <name type="common">Chlorobium tepidum</name>
    <dbReference type="NCBI Taxonomy" id="194439"/>
    <lineage>
        <taxon>Bacteria</taxon>
        <taxon>Pseudomonadati</taxon>
        <taxon>Chlorobiota</taxon>
        <taxon>Chlorobiia</taxon>
        <taxon>Chlorobiales</taxon>
        <taxon>Chlorobiaceae</taxon>
        <taxon>Chlorobaculum</taxon>
    </lineage>
</organism>
<name>PUR7_CHLTE</name>
<sequence>MNKVTLLHEGKAKKVWQTDNPDLIIQEFKDDATAFNNKKKGSIADKGVTNNAIASRLFTMLGENGIPTHFVGKLNDRDMLCKKLDILLIEVVTRNIAAGSLVRRYGFKEGTVLSKPIVELYLKNDELDDPLMNEDHAVALGLGTCEEVAHLKAMAKKINSLLVPWFAERKLRLVDFKLEFGRHKGEILLGDEISPDTCRFWDAESGEKLDKDRFRLDLGGVEDAYSEVKRRVLEQ</sequence>
<proteinExistence type="inferred from homology"/>
<evidence type="ECO:0000255" key="1">
    <source>
        <dbReference type="HAMAP-Rule" id="MF_00137"/>
    </source>
</evidence>
<reference key="1">
    <citation type="journal article" date="2002" name="Proc. Natl. Acad. Sci. U.S.A.">
        <title>The complete genome sequence of Chlorobium tepidum TLS, a photosynthetic, anaerobic, green-sulfur bacterium.</title>
        <authorList>
            <person name="Eisen J.A."/>
            <person name="Nelson K.E."/>
            <person name="Paulsen I.T."/>
            <person name="Heidelberg J.F."/>
            <person name="Wu M."/>
            <person name="Dodson R.J."/>
            <person name="DeBoy R.T."/>
            <person name="Gwinn M.L."/>
            <person name="Nelson W.C."/>
            <person name="Haft D.H."/>
            <person name="Hickey E.K."/>
            <person name="Peterson J.D."/>
            <person name="Durkin A.S."/>
            <person name="Kolonay J.F."/>
            <person name="Yang F."/>
            <person name="Holt I.E."/>
            <person name="Umayam L.A."/>
            <person name="Mason T.M."/>
            <person name="Brenner M."/>
            <person name="Shea T.P."/>
            <person name="Parksey D.S."/>
            <person name="Nierman W.C."/>
            <person name="Feldblyum T.V."/>
            <person name="Hansen C.L."/>
            <person name="Craven M.B."/>
            <person name="Radune D."/>
            <person name="Vamathevan J.J."/>
            <person name="Khouri H.M."/>
            <person name="White O."/>
            <person name="Gruber T.M."/>
            <person name="Ketchum K.A."/>
            <person name="Venter J.C."/>
            <person name="Tettelin H."/>
            <person name="Bryant D.A."/>
            <person name="Fraser C.M."/>
        </authorList>
    </citation>
    <scope>NUCLEOTIDE SEQUENCE [LARGE SCALE GENOMIC DNA]</scope>
    <source>
        <strain>ATCC 49652 / DSM 12025 / NBRC 103806 / TLS</strain>
    </source>
</reference>